<organism>
    <name type="scientific">Ectopseudomonas mendocina (strain ymp)</name>
    <name type="common">Pseudomonas mendocina</name>
    <dbReference type="NCBI Taxonomy" id="399739"/>
    <lineage>
        <taxon>Bacteria</taxon>
        <taxon>Pseudomonadati</taxon>
        <taxon>Pseudomonadota</taxon>
        <taxon>Gammaproteobacteria</taxon>
        <taxon>Pseudomonadales</taxon>
        <taxon>Pseudomonadaceae</taxon>
        <taxon>Ectopseudomonas</taxon>
    </lineage>
</organism>
<reference key="1">
    <citation type="submission" date="2007-04" db="EMBL/GenBank/DDBJ databases">
        <title>Complete sequence of Pseudomonas mendocina ymp.</title>
        <authorList>
            <consortium name="US DOE Joint Genome Institute"/>
            <person name="Copeland A."/>
            <person name="Lucas S."/>
            <person name="Lapidus A."/>
            <person name="Barry K."/>
            <person name="Glavina del Rio T."/>
            <person name="Dalin E."/>
            <person name="Tice H."/>
            <person name="Pitluck S."/>
            <person name="Kiss H."/>
            <person name="Brettin T."/>
            <person name="Detter J.C."/>
            <person name="Bruce D."/>
            <person name="Han C."/>
            <person name="Schmutz J."/>
            <person name="Larimer F."/>
            <person name="Land M."/>
            <person name="Hauser L."/>
            <person name="Kyrpides N."/>
            <person name="Mikhailova N."/>
            <person name="Hersman L."/>
            <person name="Dubois J."/>
            <person name="Maurice P."/>
            <person name="Richardson P."/>
        </authorList>
    </citation>
    <scope>NUCLEOTIDE SEQUENCE [LARGE SCALE GENOMIC DNA]</scope>
    <source>
        <strain>ymp</strain>
    </source>
</reference>
<evidence type="ECO:0000255" key="1">
    <source>
        <dbReference type="HAMAP-Rule" id="MF_00052"/>
    </source>
</evidence>
<evidence type="ECO:0000255" key="2">
    <source>
        <dbReference type="PROSITE-ProRule" id="PRU01319"/>
    </source>
</evidence>
<name>RNH2_ECTM1</name>
<proteinExistence type="inferred from homology"/>
<sequence>MQLGLDFSLVEELVAGVDEVGRGPLCGAVVTAAVILDPLRPIIGLNDSKKLTEARREVLFDEIREKALAWCIARAEVEEIDRLNILHATMLAMQRAVEGLSVTPKLALIDGNRCPRLTVPSAPVVKGDSRVPAIAAASILAKVSRDREMLEMDRLYPGYGIAGHKGYPTPVHLEALQRLGPTPIHRRSFAPVRALLEPVAVDCIAATV</sequence>
<keyword id="KW-0963">Cytoplasm</keyword>
<keyword id="KW-0255">Endonuclease</keyword>
<keyword id="KW-0378">Hydrolase</keyword>
<keyword id="KW-0464">Manganese</keyword>
<keyword id="KW-0479">Metal-binding</keyword>
<keyword id="KW-0540">Nuclease</keyword>
<feature type="chain" id="PRO_1000031182" description="Ribonuclease HII">
    <location>
        <begin position="1"/>
        <end position="208"/>
    </location>
</feature>
<feature type="domain" description="RNase H type-2" evidence="2">
    <location>
        <begin position="12"/>
        <end position="201"/>
    </location>
</feature>
<feature type="binding site" evidence="1">
    <location>
        <position position="18"/>
    </location>
    <ligand>
        <name>a divalent metal cation</name>
        <dbReference type="ChEBI" id="CHEBI:60240"/>
    </ligand>
</feature>
<feature type="binding site" evidence="1">
    <location>
        <position position="19"/>
    </location>
    <ligand>
        <name>a divalent metal cation</name>
        <dbReference type="ChEBI" id="CHEBI:60240"/>
    </ligand>
</feature>
<feature type="binding site" evidence="1">
    <location>
        <position position="110"/>
    </location>
    <ligand>
        <name>a divalent metal cation</name>
        <dbReference type="ChEBI" id="CHEBI:60240"/>
    </ligand>
</feature>
<protein>
    <recommendedName>
        <fullName evidence="1">Ribonuclease HII</fullName>
        <shortName evidence="1">RNase HII</shortName>
        <ecNumber evidence="1">3.1.26.4</ecNumber>
    </recommendedName>
</protein>
<accession>A4XWS7</accession>
<gene>
    <name evidence="1" type="primary">rnhB</name>
    <name type="ordered locus">Pmen_3039</name>
</gene>
<comment type="function">
    <text evidence="1">Endonuclease that specifically degrades the RNA of RNA-DNA hybrids.</text>
</comment>
<comment type="catalytic activity">
    <reaction evidence="1">
        <text>Endonucleolytic cleavage to 5'-phosphomonoester.</text>
        <dbReference type="EC" id="3.1.26.4"/>
    </reaction>
</comment>
<comment type="cofactor">
    <cofactor evidence="1">
        <name>Mn(2+)</name>
        <dbReference type="ChEBI" id="CHEBI:29035"/>
    </cofactor>
    <cofactor evidence="1">
        <name>Mg(2+)</name>
        <dbReference type="ChEBI" id="CHEBI:18420"/>
    </cofactor>
    <text evidence="1">Manganese or magnesium. Binds 1 divalent metal ion per monomer in the absence of substrate. May bind a second metal ion after substrate binding.</text>
</comment>
<comment type="subcellular location">
    <subcellularLocation>
        <location evidence="1">Cytoplasm</location>
    </subcellularLocation>
</comment>
<comment type="similarity">
    <text evidence="1">Belongs to the RNase HII family.</text>
</comment>
<dbReference type="EC" id="3.1.26.4" evidence="1"/>
<dbReference type="EMBL" id="CP000680">
    <property type="protein sequence ID" value="ABP85793.1"/>
    <property type="molecule type" value="Genomic_DNA"/>
</dbReference>
<dbReference type="SMR" id="A4XWS7"/>
<dbReference type="STRING" id="399739.Pmen_3039"/>
<dbReference type="KEGG" id="pmy:Pmen_3039"/>
<dbReference type="PATRIC" id="fig|399739.8.peg.3085"/>
<dbReference type="eggNOG" id="COG0164">
    <property type="taxonomic scope" value="Bacteria"/>
</dbReference>
<dbReference type="HOGENOM" id="CLU_036532_3_2_6"/>
<dbReference type="OrthoDB" id="9803420at2"/>
<dbReference type="GO" id="GO:0005737">
    <property type="term" value="C:cytoplasm"/>
    <property type="evidence" value="ECO:0007669"/>
    <property type="project" value="UniProtKB-SubCell"/>
</dbReference>
<dbReference type="GO" id="GO:0032299">
    <property type="term" value="C:ribonuclease H2 complex"/>
    <property type="evidence" value="ECO:0007669"/>
    <property type="project" value="TreeGrafter"/>
</dbReference>
<dbReference type="GO" id="GO:0030145">
    <property type="term" value="F:manganese ion binding"/>
    <property type="evidence" value="ECO:0007669"/>
    <property type="project" value="UniProtKB-UniRule"/>
</dbReference>
<dbReference type="GO" id="GO:0003723">
    <property type="term" value="F:RNA binding"/>
    <property type="evidence" value="ECO:0007669"/>
    <property type="project" value="InterPro"/>
</dbReference>
<dbReference type="GO" id="GO:0004523">
    <property type="term" value="F:RNA-DNA hybrid ribonuclease activity"/>
    <property type="evidence" value="ECO:0007669"/>
    <property type="project" value="UniProtKB-UniRule"/>
</dbReference>
<dbReference type="GO" id="GO:0043137">
    <property type="term" value="P:DNA replication, removal of RNA primer"/>
    <property type="evidence" value="ECO:0007669"/>
    <property type="project" value="TreeGrafter"/>
</dbReference>
<dbReference type="GO" id="GO:0006298">
    <property type="term" value="P:mismatch repair"/>
    <property type="evidence" value="ECO:0007669"/>
    <property type="project" value="TreeGrafter"/>
</dbReference>
<dbReference type="CDD" id="cd07182">
    <property type="entry name" value="RNase_HII_bacteria_HII_like"/>
    <property type="match status" value="1"/>
</dbReference>
<dbReference type="FunFam" id="3.30.420.10:FF:000006">
    <property type="entry name" value="Ribonuclease HII"/>
    <property type="match status" value="1"/>
</dbReference>
<dbReference type="Gene3D" id="3.30.420.10">
    <property type="entry name" value="Ribonuclease H-like superfamily/Ribonuclease H"/>
    <property type="match status" value="1"/>
</dbReference>
<dbReference type="HAMAP" id="MF_00052_B">
    <property type="entry name" value="RNase_HII_B"/>
    <property type="match status" value="1"/>
</dbReference>
<dbReference type="InterPro" id="IPR022898">
    <property type="entry name" value="RNase_HII"/>
</dbReference>
<dbReference type="InterPro" id="IPR001352">
    <property type="entry name" value="RNase_HII/HIII"/>
</dbReference>
<dbReference type="InterPro" id="IPR024567">
    <property type="entry name" value="RNase_HII/HIII_dom"/>
</dbReference>
<dbReference type="InterPro" id="IPR012337">
    <property type="entry name" value="RNaseH-like_sf"/>
</dbReference>
<dbReference type="InterPro" id="IPR036397">
    <property type="entry name" value="RNaseH_sf"/>
</dbReference>
<dbReference type="NCBIfam" id="NF000595">
    <property type="entry name" value="PRK00015.1-3"/>
    <property type="match status" value="1"/>
</dbReference>
<dbReference type="NCBIfam" id="NF000596">
    <property type="entry name" value="PRK00015.1-4"/>
    <property type="match status" value="1"/>
</dbReference>
<dbReference type="PANTHER" id="PTHR10954">
    <property type="entry name" value="RIBONUCLEASE H2 SUBUNIT A"/>
    <property type="match status" value="1"/>
</dbReference>
<dbReference type="PANTHER" id="PTHR10954:SF18">
    <property type="entry name" value="RIBONUCLEASE HII"/>
    <property type="match status" value="1"/>
</dbReference>
<dbReference type="Pfam" id="PF01351">
    <property type="entry name" value="RNase_HII"/>
    <property type="match status" value="1"/>
</dbReference>
<dbReference type="SUPFAM" id="SSF53098">
    <property type="entry name" value="Ribonuclease H-like"/>
    <property type="match status" value="1"/>
</dbReference>
<dbReference type="PROSITE" id="PS51975">
    <property type="entry name" value="RNASE_H_2"/>
    <property type="match status" value="1"/>
</dbReference>